<name>UPP_SALEP</name>
<keyword id="KW-0021">Allosteric enzyme</keyword>
<keyword id="KW-0328">Glycosyltransferase</keyword>
<keyword id="KW-0342">GTP-binding</keyword>
<keyword id="KW-0460">Magnesium</keyword>
<keyword id="KW-0547">Nucleotide-binding</keyword>
<keyword id="KW-0808">Transferase</keyword>
<sequence length="208" mass="22533">MKIVEVKHPLVKHKLGLMRENDISTKRFRELASEVGSLLTYEATADLETEKVTIEGWNGPVEIDQIKGKKITVVPILRAGLGMMEGVLENVPSARISVVGMYRNEETLEPVPYFQKLVSNIDERMALIVDPMLATGGSVIATIDLLKKAGCSSIKVLVLVAAPEGIAALEKAHPDVELYTASIDQGLNEHGYIIPGLGDAGDKIFGTK</sequence>
<accession>B5R560</accession>
<evidence type="ECO:0000255" key="1">
    <source>
        <dbReference type="HAMAP-Rule" id="MF_01218"/>
    </source>
</evidence>
<dbReference type="EC" id="2.4.2.9" evidence="1"/>
<dbReference type="EMBL" id="AM933172">
    <property type="protein sequence ID" value="CAR34064.1"/>
    <property type="molecule type" value="Genomic_DNA"/>
</dbReference>
<dbReference type="RefSeq" id="WP_000706208.1">
    <property type="nucleotide sequence ID" value="NC_011294.1"/>
</dbReference>
<dbReference type="SMR" id="B5R560"/>
<dbReference type="KEGG" id="set:SEN2479"/>
<dbReference type="HOGENOM" id="CLU_067096_2_2_6"/>
<dbReference type="UniPathway" id="UPA00574">
    <property type="reaction ID" value="UER00636"/>
</dbReference>
<dbReference type="Proteomes" id="UP000000613">
    <property type="component" value="Chromosome"/>
</dbReference>
<dbReference type="GO" id="GO:0005525">
    <property type="term" value="F:GTP binding"/>
    <property type="evidence" value="ECO:0007669"/>
    <property type="project" value="UniProtKB-KW"/>
</dbReference>
<dbReference type="GO" id="GO:0000287">
    <property type="term" value="F:magnesium ion binding"/>
    <property type="evidence" value="ECO:0007669"/>
    <property type="project" value="UniProtKB-UniRule"/>
</dbReference>
<dbReference type="GO" id="GO:0004845">
    <property type="term" value="F:uracil phosphoribosyltransferase activity"/>
    <property type="evidence" value="ECO:0007669"/>
    <property type="project" value="UniProtKB-UniRule"/>
</dbReference>
<dbReference type="GO" id="GO:0044206">
    <property type="term" value="P:UMP salvage"/>
    <property type="evidence" value="ECO:0007669"/>
    <property type="project" value="UniProtKB-UniRule"/>
</dbReference>
<dbReference type="GO" id="GO:0006223">
    <property type="term" value="P:uracil salvage"/>
    <property type="evidence" value="ECO:0007669"/>
    <property type="project" value="InterPro"/>
</dbReference>
<dbReference type="CDD" id="cd06223">
    <property type="entry name" value="PRTases_typeI"/>
    <property type="match status" value="1"/>
</dbReference>
<dbReference type="FunFam" id="3.40.50.2020:FF:000003">
    <property type="entry name" value="Uracil phosphoribosyltransferase"/>
    <property type="match status" value="1"/>
</dbReference>
<dbReference type="Gene3D" id="3.40.50.2020">
    <property type="match status" value="1"/>
</dbReference>
<dbReference type="HAMAP" id="MF_01218_B">
    <property type="entry name" value="Upp_B"/>
    <property type="match status" value="1"/>
</dbReference>
<dbReference type="InterPro" id="IPR000836">
    <property type="entry name" value="PRibTrfase_dom"/>
</dbReference>
<dbReference type="InterPro" id="IPR029057">
    <property type="entry name" value="PRTase-like"/>
</dbReference>
<dbReference type="InterPro" id="IPR034332">
    <property type="entry name" value="Upp_B"/>
</dbReference>
<dbReference type="InterPro" id="IPR050054">
    <property type="entry name" value="UPRTase/APRTase"/>
</dbReference>
<dbReference type="InterPro" id="IPR005765">
    <property type="entry name" value="Ura_phspho_trans"/>
</dbReference>
<dbReference type="NCBIfam" id="NF001097">
    <property type="entry name" value="PRK00129.1"/>
    <property type="match status" value="1"/>
</dbReference>
<dbReference type="NCBIfam" id="TIGR01091">
    <property type="entry name" value="upp"/>
    <property type="match status" value="1"/>
</dbReference>
<dbReference type="PANTHER" id="PTHR32315">
    <property type="entry name" value="ADENINE PHOSPHORIBOSYLTRANSFERASE"/>
    <property type="match status" value="1"/>
</dbReference>
<dbReference type="PANTHER" id="PTHR32315:SF4">
    <property type="entry name" value="URACIL PHOSPHORIBOSYLTRANSFERASE, CHLOROPLASTIC"/>
    <property type="match status" value="1"/>
</dbReference>
<dbReference type="Pfam" id="PF14681">
    <property type="entry name" value="UPRTase"/>
    <property type="match status" value="1"/>
</dbReference>
<dbReference type="SUPFAM" id="SSF53271">
    <property type="entry name" value="PRTase-like"/>
    <property type="match status" value="1"/>
</dbReference>
<reference key="1">
    <citation type="journal article" date="2008" name="Genome Res.">
        <title>Comparative genome analysis of Salmonella enteritidis PT4 and Salmonella gallinarum 287/91 provides insights into evolutionary and host adaptation pathways.</title>
        <authorList>
            <person name="Thomson N.R."/>
            <person name="Clayton D.J."/>
            <person name="Windhorst D."/>
            <person name="Vernikos G."/>
            <person name="Davidson S."/>
            <person name="Churcher C."/>
            <person name="Quail M.A."/>
            <person name="Stevens M."/>
            <person name="Jones M.A."/>
            <person name="Watson M."/>
            <person name="Barron A."/>
            <person name="Layton A."/>
            <person name="Pickard D."/>
            <person name="Kingsley R.A."/>
            <person name="Bignell A."/>
            <person name="Clark L."/>
            <person name="Harris B."/>
            <person name="Ormond D."/>
            <person name="Abdellah Z."/>
            <person name="Brooks K."/>
            <person name="Cherevach I."/>
            <person name="Chillingworth T."/>
            <person name="Woodward J."/>
            <person name="Norberczak H."/>
            <person name="Lord A."/>
            <person name="Arrowsmith C."/>
            <person name="Jagels K."/>
            <person name="Moule S."/>
            <person name="Mungall K."/>
            <person name="Saunders M."/>
            <person name="Whitehead S."/>
            <person name="Chabalgoity J.A."/>
            <person name="Maskell D."/>
            <person name="Humphreys T."/>
            <person name="Roberts M."/>
            <person name="Barrow P.A."/>
            <person name="Dougan G."/>
            <person name="Parkhill J."/>
        </authorList>
    </citation>
    <scope>NUCLEOTIDE SEQUENCE [LARGE SCALE GENOMIC DNA]</scope>
    <source>
        <strain>P125109</strain>
    </source>
</reference>
<protein>
    <recommendedName>
        <fullName evidence="1">Uracil phosphoribosyltransferase</fullName>
        <ecNumber evidence="1">2.4.2.9</ecNumber>
    </recommendedName>
    <alternativeName>
        <fullName evidence="1">UMP pyrophosphorylase</fullName>
    </alternativeName>
    <alternativeName>
        <fullName evidence="1">UPRTase</fullName>
    </alternativeName>
</protein>
<comment type="function">
    <text evidence="1">Catalyzes the conversion of uracil and 5-phospho-alpha-D-ribose 1-diphosphate (PRPP) to UMP and diphosphate.</text>
</comment>
<comment type="catalytic activity">
    <reaction evidence="1">
        <text>UMP + diphosphate = 5-phospho-alpha-D-ribose 1-diphosphate + uracil</text>
        <dbReference type="Rhea" id="RHEA:13017"/>
        <dbReference type="ChEBI" id="CHEBI:17568"/>
        <dbReference type="ChEBI" id="CHEBI:33019"/>
        <dbReference type="ChEBI" id="CHEBI:57865"/>
        <dbReference type="ChEBI" id="CHEBI:58017"/>
        <dbReference type="EC" id="2.4.2.9"/>
    </reaction>
</comment>
<comment type="cofactor">
    <cofactor evidence="1">
        <name>Mg(2+)</name>
        <dbReference type="ChEBI" id="CHEBI:18420"/>
    </cofactor>
    <text evidence="1">Binds 1 Mg(2+) ion per subunit. The magnesium is bound as Mg-PRPP.</text>
</comment>
<comment type="activity regulation">
    <text evidence="1">Allosterically activated by GTP.</text>
</comment>
<comment type="pathway">
    <text evidence="1">Pyrimidine metabolism; UMP biosynthesis via salvage pathway; UMP from uracil: step 1/1.</text>
</comment>
<comment type="similarity">
    <text evidence="1">Belongs to the UPRTase family.</text>
</comment>
<organism>
    <name type="scientific">Salmonella enteritidis PT4 (strain P125109)</name>
    <dbReference type="NCBI Taxonomy" id="550537"/>
    <lineage>
        <taxon>Bacteria</taxon>
        <taxon>Pseudomonadati</taxon>
        <taxon>Pseudomonadota</taxon>
        <taxon>Gammaproteobacteria</taxon>
        <taxon>Enterobacterales</taxon>
        <taxon>Enterobacteriaceae</taxon>
        <taxon>Salmonella</taxon>
    </lineage>
</organism>
<gene>
    <name evidence="1" type="primary">upp</name>
    <name type="ordered locus">SEN2479</name>
</gene>
<proteinExistence type="inferred from homology"/>
<feature type="chain" id="PRO_1000139156" description="Uracil phosphoribosyltransferase">
    <location>
        <begin position="1"/>
        <end position="208"/>
    </location>
</feature>
<feature type="binding site" evidence="1">
    <location>
        <position position="78"/>
    </location>
    <ligand>
        <name>5-phospho-alpha-D-ribose 1-diphosphate</name>
        <dbReference type="ChEBI" id="CHEBI:58017"/>
    </ligand>
</feature>
<feature type="binding site" evidence="1">
    <location>
        <position position="103"/>
    </location>
    <ligand>
        <name>5-phospho-alpha-D-ribose 1-diphosphate</name>
        <dbReference type="ChEBI" id="CHEBI:58017"/>
    </ligand>
</feature>
<feature type="binding site" evidence="1">
    <location>
        <begin position="130"/>
        <end position="138"/>
    </location>
    <ligand>
        <name>5-phospho-alpha-D-ribose 1-diphosphate</name>
        <dbReference type="ChEBI" id="CHEBI:58017"/>
    </ligand>
</feature>
<feature type="binding site" evidence="1">
    <location>
        <position position="193"/>
    </location>
    <ligand>
        <name>uracil</name>
        <dbReference type="ChEBI" id="CHEBI:17568"/>
    </ligand>
</feature>
<feature type="binding site" evidence="1">
    <location>
        <begin position="198"/>
        <end position="200"/>
    </location>
    <ligand>
        <name>uracil</name>
        <dbReference type="ChEBI" id="CHEBI:17568"/>
    </ligand>
</feature>
<feature type="binding site" evidence="1">
    <location>
        <position position="199"/>
    </location>
    <ligand>
        <name>5-phospho-alpha-D-ribose 1-diphosphate</name>
        <dbReference type="ChEBI" id="CHEBI:58017"/>
    </ligand>
</feature>